<protein>
    <recommendedName>
        <fullName evidence="1">2-dehydro-3-deoxyphosphooctonate aldolase</fullName>
        <ecNumber evidence="1">2.5.1.55</ecNumber>
    </recommendedName>
    <alternativeName>
        <fullName evidence="1">3-deoxy-D-manno-octulosonic acid 8-phosphate synthase</fullName>
    </alternativeName>
    <alternativeName>
        <fullName evidence="1">KDO-8-phosphate synthase</fullName>
        <shortName evidence="1">KDO 8-P synthase</shortName>
        <shortName evidence="1">KDOPS</shortName>
    </alternativeName>
    <alternativeName>
        <fullName evidence="1">Phospho-2-dehydro-3-deoxyoctonate aldolase</fullName>
    </alternativeName>
</protein>
<accession>Q604M5</accession>
<reference key="1">
    <citation type="journal article" date="2004" name="PLoS Biol.">
        <title>Genomic insights into methanotrophy: the complete genome sequence of Methylococcus capsulatus (Bath).</title>
        <authorList>
            <person name="Ward N.L."/>
            <person name="Larsen O."/>
            <person name="Sakwa J."/>
            <person name="Bruseth L."/>
            <person name="Khouri H.M."/>
            <person name="Durkin A.S."/>
            <person name="Dimitrov G."/>
            <person name="Jiang L."/>
            <person name="Scanlan D."/>
            <person name="Kang K.H."/>
            <person name="Lewis M.R."/>
            <person name="Nelson K.E."/>
            <person name="Methe B.A."/>
            <person name="Wu M."/>
            <person name="Heidelberg J.F."/>
            <person name="Paulsen I.T."/>
            <person name="Fouts D.E."/>
            <person name="Ravel J."/>
            <person name="Tettelin H."/>
            <person name="Ren Q."/>
            <person name="Read T.D."/>
            <person name="DeBoy R.T."/>
            <person name="Seshadri R."/>
            <person name="Salzberg S.L."/>
            <person name="Jensen H.B."/>
            <person name="Birkeland N.K."/>
            <person name="Nelson W.C."/>
            <person name="Dodson R.J."/>
            <person name="Grindhaug S.H."/>
            <person name="Holt I.E."/>
            <person name="Eidhammer I."/>
            <person name="Jonasen I."/>
            <person name="Vanaken S."/>
            <person name="Utterback T.R."/>
            <person name="Feldblyum T.V."/>
            <person name="Fraser C.M."/>
            <person name="Lillehaug J.R."/>
            <person name="Eisen J.A."/>
        </authorList>
    </citation>
    <scope>NUCLEOTIDE SEQUENCE [LARGE SCALE GENOMIC DNA]</scope>
    <source>
        <strain>ATCC 33009 / NCIMB 11132 / Bath</strain>
    </source>
</reference>
<evidence type="ECO:0000255" key="1">
    <source>
        <dbReference type="HAMAP-Rule" id="MF_00056"/>
    </source>
</evidence>
<evidence type="ECO:0000305" key="2"/>
<comment type="catalytic activity">
    <reaction evidence="1">
        <text>D-arabinose 5-phosphate + phosphoenolpyruvate + H2O = 3-deoxy-alpha-D-manno-2-octulosonate-8-phosphate + phosphate</text>
        <dbReference type="Rhea" id="RHEA:14053"/>
        <dbReference type="ChEBI" id="CHEBI:15377"/>
        <dbReference type="ChEBI" id="CHEBI:43474"/>
        <dbReference type="ChEBI" id="CHEBI:57693"/>
        <dbReference type="ChEBI" id="CHEBI:58702"/>
        <dbReference type="ChEBI" id="CHEBI:85985"/>
        <dbReference type="EC" id="2.5.1.55"/>
    </reaction>
</comment>
<comment type="pathway">
    <text evidence="1">Carbohydrate biosynthesis; 3-deoxy-D-manno-octulosonate biosynthesis; 3-deoxy-D-manno-octulosonate from D-ribulose 5-phosphate: step 2/3.</text>
</comment>
<comment type="pathway">
    <text evidence="1">Bacterial outer membrane biogenesis; lipopolysaccharide biosynthesis.</text>
</comment>
<comment type="subcellular location">
    <subcellularLocation>
        <location evidence="1">Cytoplasm</location>
    </subcellularLocation>
</comment>
<comment type="similarity">
    <text evidence="1">Belongs to the KdsA family.</text>
</comment>
<comment type="sequence caution" evidence="2">
    <conflict type="erroneous initiation">
        <sequence resource="EMBL-CDS" id="AAU91337"/>
    </conflict>
</comment>
<keyword id="KW-0963">Cytoplasm</keyword>
<keyword id="KW-0448">Lipopolysaccharide biosynthesis</keyword>
<keyword id="KW-1185">Reference proteome</keyword>
<keyword id="KW-0808">Transferase</keyword>
<dbReference type="EC" id="2.5.1.55" evidence="1"/>
<dbReference type="EMBL" id="AE017282">
    <property type="protein sequence ID" value="AAU91337.1"/>
    <property type="status" value="ALT_INIT"/>
    <property type="molecule type" value="Genomic_DNA"/>
</dbReference>
<dbReference type="RefSeq" id="WP_010961735.1">
    <property type="nucleotide sequence ID" value="NC_002977.6"/>
</dbReference>
<dbReference type="SMR" id="Q604M5"/>
<dbReference type="STRING" id="243233.MCA2514"/>
<dbReference type="GeneID" id="88224710"/>
<dbReference type="KEGG" id="mca:MCA2514"/>
<dbReference type="eggNOG" id="COG2877">
    <property type="taxonomic scope" value="Bacteria"/>
</dbReference>
<dbReference type="HOGENOM" id="CLU_036666_0_0_6"/>
<dbReference type="UniPathway" id="UPA00030"/>
<dbReference type="UniPathway" id="UPA00357">
    <property type="reaction ID" value="UER00474"/>
</dbReference>
<dbReference type="Proteomes" id="UP000006821">
    <property type="component" value="Chromosome"/>
</dbReference>
<dbReference type="GO" id="GO:0005737">
    <property type="term" value="C:cytoplasm"/>
    <property type="evidence" value="ECO:0007669"/>
    <property type="project" value="UniProtKB-SubCell"/>
</dbReference>
<dbReference type="GO" id="GO:0008676">
    <property type="term" value="F:3-deoxy-8-phosphooctulonate synthase activity"/>
    <property type="evidence" value="ECO:0007669"/>
    <property type="project" value="UniProtKB-UniRule"/>
</dbReference>
<dbReference type="GO" id="GO:0019294">
    <property type="term" value="P:keto-3-deoxy-D-manno-octulosonic acid biosynthetic process"/>
    <property type="evidence" value="ECO:0007669"/>
    <property type="project" value="UniProtKB-UniRule"/>
</dbReference>
<dbReference type="Gene3D" id="3.20.20.70">
    <property type="entry name" value="Aldolase class I"/>
    <property type="match status" value="1"/>
</dbReference>
<dbReference type="HAMAP" id="MF_00056">
    <property type="entry name" value="KDO8P_synth"/>
    <property type="match status" value="1"/>
</dbReference>
<dbReference type="InterPro" id="IPR013785">
    <property type="entry name" value="Aldolase_TIM"/>
</dbReference>
<dbReference type="InterPro" id="IPR006218">
    <property type="entry name" value="DAHP1/KDSA"/>
</dbReference>
<dbReference type="InterPro" id="IPR006269">
    <property type="entry name" value="KDO8P_synthase"/>
</dbReference>
<dbReference type="NCBIfam" id="TIGR01362">
    <property type="entry name" value="KDO8P_synth"/>
    <property type="match status" value="1"/>
</dbReference>
<dbReference type="NCBIfam" id="NF003543">
    <property type="entry name" value="PRK05198.1"/>
    <property type="match status" value="1"/>
</dbReference>
<dbReference type="PANTHER" id="PTHR21057">
    <property type="entry name" value="PHOSPHO-2-DEHYDRO-3-DEOXYHEPTONATE ALDOLASE"/>
    <property type="match status" value="1"/>
</dbReference>
<dbReference type="Pfam" id="PF00793">
    <property type="entry name" value="DAHP_synth_1"/>
    <property type="match status" value="1"/>
</dbReference>
<dbReference type="SUPFAM" id="SSF51569">
    <property type="entry name" value="Aldolase"/>
    <property type="match status" value="1"/>
</dbReference>
<name>KDSA_METCA</name>
<organism>
    <name type="scientific">Methylococcus capsulatus (strain ATCC 33009 / NCIMB 11132 / Bath)</name>
    <dbReference type="NCBI Taxonomy" id="243233"/>
    <lineage>
        <taxon>Bacteria</taxon>
        <taxon>Pseudomonadati</taxon>
        <taxon>Pseudomonadota</taxon>
        <taxon>Gammaproteobacteria</taxon>
        <taxon>Methylococcales</taxon>
        <taxon>Methylococcaceae</taxon>
        <taxon>Methylococcus</taxon>
    </lineage>
</organism>
<feature type="chain" id="PRO_0000187141" description="2-dehydro-3-deoxyphosphooctonate aldolase">
    <location>
        <begin position="1"/>
        <end position="283"/>
    </location>
</feature>
<gene>
    <name evidence="1" type="primary">kdsA</name>
    <name type="ordered locus">MCA2514</name>
</gene>
<proteinExistence type="inferred from homology"/>
<sequence length="283" mass="30506">MSNVETSARPFELCGFPVGLEHPLFLIAGPCVIETEQLALDTAGALKEITDGLGIPFIYKSSFDKANRSSHASYRGPGMEEGLRILAEVKRQIGVPVLTDVHEDTPLQEVASVVDVLQTPAFLCRQTNFIQNVANTGKPVNLKKGQFLAPWDMKHVAAKALATGNRHIMVCERGVSFGYNNLVSDMRSLSIMRETGCPVVYDATHSVQLPGGQGTASGGQREFVPALARAAVAVGISGLFMETHPDPDRALSDGPNSWPLDRMKALLELLSTLDRTVKASPLL</sequence>